<dbReference type="EMBL" id="AK009330">
    <property type="protein sequence ID" value="BAB26222.1"/>
    <property type="molecule type" value="mRNA"/>
</dbReference>
<dbReference type="EMBL" id="AK037108">
    <property type="protein sequence ID" value="BAC29706.1"/>
    <property type="molecule type" value="mRNA"/>
</dbReference>
<dbReference type="EMBL" id="BC019534">
    <property type="protein sequence ID" value="AAH19534.1"/>
    <property type="molecule type" value="mRNA"/>
</dbReference>
<dbReference type="EMBL" id="BC085262">
    <property type="protein sequence ID" value="AAH85262.1"/>
    <property type="molecule type" value="mRNA"/>
</dbReference>
<dbReference type="CCDS" id="CCDS22246.1"/>
<dbReference type="RefSeq" id="NP_082274.1">
    <property type="nucleotide sequence ID" value="NM_027998.4"/>
</dbReference>
<dbReference type="SMR" id="Q9D7D7"/>
<dbReference type="FunCoup" id="Q9D7D7">
    <property type="interactions" value="291"/>
</dbReference>
<dbReference type="STRING" id="10090.ENSMUSP00000049725"/>
<dbReference type="iPTMnet" id="Q9D7D7"/>
<dbReference type="PhosphoSitePlus" id="Q9D7D7"/>
<dbReference type="PaxDb" id="10090-ENSMUSP00000049725"/>
<dbReference type="ProteomicsDB" id="283579"/>
<dbReference type="Antibodypedia" id="52870">
    <property type="antibodies" value="116 antibodies from 23 providers"/>
</dbReference>
<dbReference type="DNASU" id="71908"/>
<dbReference type="Ensembl" id="ENSMUST00000060128.7">
    <property type="protein sequence ID" value="ENSMUSP00000049725.6"/>
    <property type="gene ID" value="ENSMUSG00000055976.7"/>
</dbReference>
<dbReference type="GeneID" id="71908"/>
<dbReference type="KEGG" id="mmu:71908"/>
<dbReference type="UCSC" id="uc009llc.2">
    <property type="organism name" value="mouse"/>
</dbReference>
<dbReference type="AGR" id="MGI:1919158"/>
<dbReference type="CTD" id="137075"/>
<dbReference type="MGI" id="MGI:1919158">
    <property type="gene designation" value="Cldn23"/>
</dbReference>
<dbReference type="VEuPathDB" id="HostDB:ENSMUSG00000055976"/>
<dbReference type="eggNOG" id="ENOG502RYXX">
    <property type="taxonomic scope" value="Eukaryota"/>
</dbReference>
<dbReference type="GeneTree" id="ENSGT00390000006975"/>
<dbReference type="HOGENOM" id="CLU_089834_0_0_1"/>
<dbReference type="InParanoid" id="Q9D7D7"/>
<dbReference type="OMA" id="VRCWQDE"/>
<dbReference type="OrthoDB" id="8790791at2759"/>
<dbReference type="PhylomeDB" id="Q9D7D7"/>
<dbReference type="TreeFam" id="TF331936"/>
<dbReference type="BioGRID-ORCS" id="71908">
    <property type="hits" value="1 hit in 78 CRISPR screens"/>
</dbReference>
<dbReference type="PRO" id="PR:Q9D7D7"/>
<dbReference type="Proteomes" id="UP000000589">
    <property type="component" value="Chromosome 8"/>
</dbReference>
<dbReference type="RNAct" id="Q9D7D7">
    <property type="molecule type" value="protein"/>
</dbReference>
<dbReference type="Bgee" id="ENSMUSG00000055976">
    <property type="expression patterns" value="Expressed in urinary bladder urothelium and 81 other cell types or tissues"/>
</dbReference>
<dbReference type="ExpressionAtlas" id="Q9D7D7">
    <property type="expression patterns" value="baseline and differential"/>
</dbReference>
<dbReference type="GO" id="GO:0005923">
    <property type="term" value="C:bicellular tight junction"/>
    <property type="evidence" value="ECO:0000250"/>
    <property type="project" value="UniProtKB"/>
</dbReference>
<dbReference type="GO" id="GO:0005886">
    <property type="term" value="C:plasma membrane"/>
    <property type="evidence" value="ECO:0007669"/>
    <property type="project" value="UniProtKB-SubCell"/>
</dbReference>
<dbReference type="GO" id="GO:0042802">
    <property type="term" value="F:identical protein binding"/>
    <property type="evidence" value="ECO:0000250"/>
    <property type="project" value="UniProtKB"/>
</dbReference>
<dbReference type="GO" id="GO:0005198">
    <property type="term" value="F:structural molecule activity"/>
    <property type="evidence" value="ECO:0007669"/>
    <property type="project" value="InterPro"/>
</dbReference>
<dbReference type="GO" id="GO:0016338">
    <property type="term" value="P:calcium-independent cell-cell adhesion via plasma membrane cell-adhesion molecules"/>
    <property type="evidence" value="ECO:0000250"/>
    <property type="project" value="UniProtKB"/>
</dbReference>
<dbReference type="FunFam" id="1.20.140.150:FF:000056">
    <property type="entry name" value="Claudin"/>
    <property type="match status" value="1"/>
</dbReference>
<dbReference type="Gene3D" id="1.20.140.150">
    <property type="match status" value="1"/>
</dbReference>
<dbReference type="InterPro" id="IPR006187">
    <property type="entry name" value="Claudin"/>
</dbReference>
<dbReference type="InterPro" id="IPR017974">
    <property type="entry name" value="Claudin_CS"/>
</dbReference>
<dbReference type="InterPro" id="IPR004031">
    <property type="entry name" value="PMP22/EMP/MP20/Claudin"/>
</dbReference>
<dbReference type="PANTHER" id="PTHR12002">
    <property type="entry name" value="CLAUDIN"/>
    <property type="match status" value="1"/>
</dbReference>
<dbReference type="Pfam" id="PF00822">
    <property type="entry name" value="PMP22_Claudin"/>
    <property type="match status" value="1"/>
</dbReference>
<dbReference type="PRINTS" id="PR01077">
    <property type="entry name" value="CLAUDIN"/>
</dbReference>
<dbReference type="PROSITE" id="PS01346">
    <property type="entry name" value="CLAUDIN"/>
    <property type="match status" value="1"/>
</dbReference>
<organism>
    <name type="scientific">Mus musculus</name>
    <name type="common">Mouse</name>
    <dbReference type="NCBI Taxonomy" id="10090"/>
    <lineage>
        <taxon>Eukaryota</taxon>
        <taxon>Metazoa</taxon>
        <taxon>Chordata</taxon>
        <taxon>Craniata</taxon>
        <taxon>Vertebrata</taxon>
        <taxon>Euteleostomi</taxon>
        <taxon>Mammalia</taxon>
        <taxon>Eutheria</taxon>
        <taxon>Euarchontoglires</taxon>
        <taxon>Glires</taxon>
        <taxon>Rodentia</taxon>
        <taxon>Myomorpha</taxon>
        <taxon>Muroidea</taxon>
        <taxon>Muridae</taxon>
        <taxon>Murinae</taxon>
        <taxon>Mus</taxon>
        <taxon>Mus</taxon>
    </lineage>
</organism>
<reference key="1">
    <citation type="journal article" date="2005" name="Science">
        <title>The transcriptional landscape of the mammalian genome.</title>
        <authorList>
            <person name="Carninci P."/>
            <person name="Kasukawa T."/>
            <person name="Katayama S."/>
            <person name="Gough J."/>
            <person name="Frith M.C."/>
            <person name="Maeda N."/>
            <person name="Oyama R."/>
            <person name="Ravasi T."/>
            <person name="Lenhard B."/>
            <person name="Wells C."/>
            <person name="Kodzius R."/>
            <person name="Shimokawa K."/>
            <person name="Bajic V.B."/>
            <person name="Brenner S.E."/>
            <person name="Batalov S."/>
            <person name="Forrest A.R."/>
            <person name="Zavolan M."/>
            <person name="Davis M.J."/>
            <person name="Wilming L.G."/>
            <person name="Aidinis V."/>
            <person name="Allen J.E."/>
            <person name="Ambesi-Impiombato A."/>
            <person name="Apweiler R."/>
            <person name="Aturaliya R.N."/>
            <person name="Bailey T.L."/>
            <person name="Bansal M."/>
            <person name="Baxter L."/>
            <person name="Beisel K.W."/>
            <person name="Bersano T."/>
            <person name="Bono H."/>
            <person name="Chalk A.M."/>
            <person name="Chiu K.P."/>
            <person name="Choudhary V."/>
            <person name="Christoffels A."/>
            <person name="Clutterbuck D.R."/>
            <person name="Crowe M.L."/>
            <person name="Dalla E."/>
            <person name="Dalrymple B.P."/>
            <person name="de Bono B."/>
            <person name="Della Gatta G."/>
            <person name="di Bernardo D."/>
            <person name="Down T."/>
            <person name="Engstrom P."/>
            <person name="Fagiolini M."/>
            <person name="Faulkner G."/>
            <person name="Fletcher C.F."/>
            <person name="Fukushima T."/>
            <person name="Furuno M."/>
            <person name="Futaki S."/>
            <person name="Gariboldi M."/>
            <person name="Georgii-Hemming P."/>
            <person name="Gingeras T.R."/>
            <person name="Gojobori T."/>
            <person name="Green R.E."/>
            <person name="Gustincich S."/>
            <person name="Harbers M."/>
            <person name="Hayashi Y."/>
            <person name="Hensch T.K."/>
            <person name="Hirokawa N."/>
            <person name="Hill D."/>
            <person name="Huminiecki L."/>
            <person name="Iacono M."/>
            <person name="Ikeo K."/>
            <person name="Iwama A."/>
            <person name="Ishikawa T."/>
            <person name="Jakt M."/>
            <person name="Kanapin A."/>
            <person name="Katoh M."/>
            <person name="Kawasawa Y."/>
            <person name="Kelso J."/>
            <person name="Kitamura H."/>
            <person name="Kitano H."/>
            <person name="Kollias G."/>
            <person name="Krishnan S.P."/>
            <person name="Kruger A."/>
            <person name="Kummerfeld S.K."/>
            <person name="Kurochkin I.V."/>
            <person name="Lareau L.F."/>
            <person name="Lazarevic D."/>
            <person name="Lipovich L."/>
            <person name="Liu J."/>
            <person name="Liuni S."/>
            <person name="McWilliam S."/>
            <person name="Madan Babu M."/>
            <person name="Madera M."/>
            <person name="Marchionni L."/>
            <person name="Matsuda H."/>
            <person name="Matsuzawa S."/>
            <person name="Miki H."/>
            <person name="Mignone F."/>
            <person name="Miyake S."/>
            <person name="Morris K."/>
            <person name="Mottagui-Tabar S."/>
            <person name="Mulder N."/>
            <person name="Nakano N."/>
            <person name="Nakauchi H."/>
            <person name="Ng P."/>
            <person name="Nilsson R."/>
            <person name="Nishiguchi S."/>
            <person name="Nishikawa S."/>
            <person name="Nori F."/>
            <person name="Ohara O."/>
            <person name="Okazaki Y."/>
            <person name="Orlando V."/>
            <person name="Pang K.C."/>
            <person name="Pavan W.J."/>
            <person name="Pavesi G."/>
            <person name="Pesole G."/>
            <person name="Petrovsky N."/>
            <person name="Piazza S."/>
            <person name="Reed J."/>
            <person name="Reid J.F."/>
            <person name="Ring B.Z."/>
            <person name="Ringwald M."/>
            <person name="Rost B."/>
            <person name="Ruan Y."/>
            <person name="Salzberg S.L."/>
            <person name="Sandelin A."/>
            <person name="Schneider C."/>
            <person name="Schoenbach C."/>
            <person name="Sekiguchi K."/>
            <person name="Semple C.A."/>
            <person name="Seno S."/>
            <person name="Sessa L."/>
            <person name="Sheng Y."/>
            <person name="Shibata Y."/>
            <person name="Shimada H."/>
            <person name="Shimada K."/>
            <person name="Silva D."/>
            <person name="Sinclair B."/>
            <person name="Sperling S."/>
            <person name="Stupka E."/>
            <person name="Sugiura K."/>
            <person name="Sultana R."/>
            <person name="Takenaka Y."/>
            <person name="Taki K."/>
            <person name="Tammoja K."/>
            <person name="Tan S.L."/>
            <person name="Tang S."/>
            <person name="Taylor M.S."/>
            <person name="Tegner J."/>
            <person name="Teichmann S.A."/>
            <person name="Ueda H.R."/>
            <person name="van Nimwegen E."/>
            <person name="Verardo R."/>
            <person name="Wei C.L."/>
            <person name="Yagi K."/>
            <person name="Yamanishi H."/>
            <person name="Zabarovsky E."/>
            <person name="Zhu S."/>
            <person name="Zimmer A."/>
            <person name="Hide W."/>
            <person name="Bult C."/>
            <person name="Grimmond S.M."/>
            <person name="Teasdale R.D."/>
            <person name="Liu E.T."/>
            <person name="Brusic V."/>
            <person name="Quackenbush J."/>
            <person name="Wahlestedt C."/>
            <person name="Mattick J.S."/>
            <person name="Hume D.A."/>
            <person name="Kai C."/>
            <person name="Sasaki D."/>
            <person name="Tomaru Y."/>
            <person name="Fukuda S."/>
            <person name="Kanamori-Katayama M."/>
            <person name="Suzuki M."/>
            <person name="Aoki J."/>
            <person name="Arakawa T."/>
            <person name="Iida J."/>
            <person name="Imamura K."/>
            <person name="Itoh M."/>
            <person name="Kato T."/>
            <person name="Kawaji H."/>
            <person name="Kawagashira N."/>
            <person name="Kawashima T."/>
            <person name="Kojima M."/>
            <person name="Kondo S."/>
            <person name="Konno H."/>
            <person name="Nakano K."/>
            <person name="Ninomiya N."/>
            <person name="Nishio T."/>
            <person name="Okada M."/>
            <person name="Plessy C."/>
            <person name="Shibata K."/>
            <person name="Shiraki T."/>
            <person name="Suzuki S."/>
            <person name="Tagami M."/>
            <person name="Waki K."/>
            <person name="Watahiki A."/>
            <person name="Okamura-Oho Y."/>
            <person name="Suzuki H."/>
            <person name="Kawai J."/>
            <person name="Hayashizaki Y."/>
        </authorList>
    </citation>
    <scope>NUCLEOTIDE SEQUENCE [LARGE SCALE MRNA]</scope>
    <source>
        <strain>C57BL/6J</strain>
        <tissue>Tongue</tissue>
        <tissue>Vagina</tissue>
    </source>
</reference>
<reference key="2">
    <citation type="journal article" date="2004" name="Genome Res.">
        <title>The status, quality, and expansion of the NIH full-length cDNA project: the Mammalian Gene Collection (MGC).</title>
        <authorList>
            <consortium name="The MGC Project Team"/>
        </authorList>
    </citation>
    <scope>NUCLEOTIDE SEQUENCE [LARGE SCALE MRNA]</scope>
    <source>
        <strain>FVB/N</strain>
        <tissue>Colon</tissue>
    </source>
</reference>
<reference key="3">
    <citation type="journal article" date="2003" name="Int. J. Mol. Med.">
        <title>CLDN23 gene, frequently down-regulated in intestinal-type gastric cancer, is a novel member of CLAUDIN gene family.</title>
        <authorList>
            <person name="Katoh M."/>
            <person name="Katoh M."/>
        </authorList>
    </citation>
    <scope>IDENTIFICATION</scope>
</reference>
<reference key="4">
    <citation type="journal article" date="2010" name="Cell">
        <title>A tissue-specific atlas of mouse protein phosphorylation and expression.</title>
        <authorList>
            <person name="Huttlin E.L."/>
            <person name="Jedrychowski M.P."/>
            <person name="Elias J.E."/>
            <person name="Goswami T."/>
            <person name="Rad R."/>
            <person name="Beausoleil S.A."/>
            <person name="Villen J."/>
            <person name="Haas W."/>
            <person name="Sowa M.E."/>
            <person name="Gygi S.P."/>
        </authorList>
    </citation>
    <scope>IDENTIFICATION BY MASS SPECTROMETRY [LARGE SCALE ANALYSIS]</scope>
    <source>
        <tissue>Testis</tissue>
    </source>
</reference>
<proteinExistence type="evidence at protein level"/>
<name>CLD23_MOUSE</name>
<keyword id="KW-0965">Cell junction</keyword>
<keyword id="KW-1003">Cell membrane</keyword>
<keyword id="KW-0472">Membrane</keyword>
<keyword id="KW-1185">Reference proteome</keyword>
<keyword id="KW-0796">Tight junction</keyword>
<keyword id="KW-0812">Transmembrane</keyword>
<keyword id="KW-1133">Transmembrane helix</keyword>
<feature type="chain" id="PRO_0000144788" description="Claudin-23">
    <location>
        <begin position="1"/>
        <end position="296"/>
    </location>
</feature>
<feature type="topological domain" description="Cytoplasmic" evidence="2">
    <location>
        <begin position="1"/>
        <end position="2"/>
    </location>
</feature>
<feature type="transmembrane region" description="Helical" evidence="2">
    <location>
        <begin position="3"/>
        <end position="23"/>
    </location>
</feature>
<feature type="topological domain" description="Extracellular" evidence="2">
    <location>
        <begin position="24"/>
        <end position="81"/>
    </location>
</feature>
<feature type="transmembrane region" description="Helical" evidence="2">
    <location>
        <begin position="82"/>
        <end position="102"/>
    </location>
</feature>
<feature type="topological domain" description="Cytoplasmic" evidence="2">
    <location>
        <begin position="103"/>
        <end position="111"/>
    </location>
</feature>
<feature type="transmembrane region" description="Helical" evidence="2">
    <location>
        <begin position="112"/>
        <end position="132"/>
    </location>
</feature>
<feature type="topological domain" description="Extracellular" evidence="2">
    <location>
        <begin position="133"/>
        <end position="160"/>
    </location>
</feature>
<feature type="transmembrane region" description="Helical" evidence="2">
    <location>
        <begin position="161"/>
        <end position="181"/>
    </location>
</feature>
<feature type="topological domain" description="Cytoplasmic" evidence="2">
    <location>
        <begin position="182"/>
        <end position="296"/>
    </location>
</feature>
<feature type="region of interest" description="Disordered" evidence="3">
    <location>
        <begin position="224"/>
        <end position="296"/>
    </location>
</feature>
<feature type="compositionally biased region" description="Low complexity" evidence="3">
    <location>
        <begin position="273"/>
        <end position="284"/>
    </location>
</feature>
<feature type="compositionally biased region" description="Polar residues" evidence="3">
    <location>
        <begin position="285"/>
        <end position="296"/>
    </location>
</feature>
<gene>
    <name type="primary">Cldn23</name>
</gene>
<comment type="function">
    <text evidence="1">Plays a major role in tight junction-specific obliteration of the intercellular space, through calcium-independent cell-adhesion activity.</text>
</comment>
<comment type="subcellular location">
    <subcellularLocation>
        <location evidence="1">Cell junction</location>
        <location evidence="1">Tight junction</location>
    </subcellularLocation>
    <subcellularLocation>
        <location evidence="1">Cell membrane</location>
        <topology evidence="1">Multi-pass membrane protein</topology>
    </subcellularLocation>
</comment>
<comment type="similarity">
    <text evidence="4">Belongs to the claudin family.</text>
</comment>
<accession>Q9D7D7</accession>
<protein>
    <recommendedName>
        <fullName>Claudin-23</fullName>
    </recommendedName>
</protein>
<sequence>MRTPVVMTLGMVLTPCGLLLNLVSTLAPGWRLVKGFLDQPVDVVLYQGLWDICREQSSRERECGQPDEWNYFQTQPVQVARGLMITSLATTALGLLLASLGVRCWQDEPHYGLAGLSGVVFFVAGLFSLIPVSWYNHFLSDPDVLAAPSSPVTVQVSYSLVLGYLGSCLLLLGGFSLALSFAPWCEERCRRCRKAPPAGPRRSSISTVYVDWPEPALTPAIKYYSDGQHRPPPTAEHRDTSKLKVGFPMPRPPPKSYTNPMDVLEGEEKKTATSQGGSSSRSTRPCQNSLPCDSDL</sequence>
<evidence type="ECO:0000250" key="1"/>
<evidence type="ECO:0000255" key="2"/>
<evidence type="ECO:0000256" key="3">
    <source>
        <dbReference type="SAM" id="MobiDB-lite"/>
    </source>
</evidence>
<evidence type="ECO:0000305" key="4"/>